<gene>
    <name evidence="1" type="primary">cysS</name>
    <name type="ordered locus">SSP2226</name>
</gene>
<protein>
    <recommendedName>
        <fullName evidence="1">Cysteine--tRNA ligase</fullName>
        <ecNumber evidence="1">6.1.1.16</ecNumber>
    </recommendedName>
    <alternativeName>
        <fullName evidence="1">Cysteinyl-tRNA synthetase</fullName>
        <shortName evidence="1">CysRS</shortName>
    </alternativeName>
</protein>
<sequence length="466" mass="53687">MITLYNTLTRQKETFEPIEPGKVKMYVCGPTVYNYIHIGNARPAINYDVVRRYFEYQGYEVVFVSNFTDVDDKLIKRSKELDESVETIADRYIDAFYEDVGALNVKKATSNPRVMNHMDDIINFIKDLVDEGYAYESGGDVYFRTRKFQDYGKLSHQSLNDLKVGARIEQGEQKEDALDFTLWKQAKPGEISWESPFGEGRPGWHIECSVMAYHELGATIDIHAGGTDLQFPHHENEIAQSEAHNHAPFANYWMHNGFINIDNEKMSKSLGNFVLVHDIIKQIDPDVLRFFMISVHYRSPINYNMELVEAAKSGLERVRNSYQAIEEREAIATDIEAQSDYIAEIDKILEQFETVMNDDFNTANAITAWYDLAKLANKYVLENTTSTKVLGRFKEVYQIFSDVLGVPLKGKDSDELLDEEVEALIEERNNARKDKDFARADEIRDQLKEQNIILEDTPQGVRFKRG</sequence>
<comment type="catalytic activity">
    <reaction evidence="1">
        <text>tRNA(Cys) + L-cysteine + ATP = L-cysteinyl-tRNA(Cys) + AMP + diphosphate</text>
        <dbReference type="Rhea" id="RHEA:17773"/>
        <dbReference type="Rhea" id="RHEA-COMP:9661"/>
        <dbReference type="Rhea" id="RHEA-COMP:9679"/>
        <dbReference type="ChEBI" id="CHEBI:30616"/>
        <dbReference type="ChEBI" id="CHEBI:33019"/>
        <dbReference type="ChEBI" id="CHEBI:35235"/>
        <dbReference type="ChEBI" id="CHEBI:78442"/>
        <dbReference type="ChEBI" id="CHEBI:78517"/>
        <dbReference type="ChEBI" id="CHEBI:456215"/>
        <dbReference type="EC" id="6.1.1.16"/>
    </reaction>
</comment>
<comment type="cofactor">
    <cofactor evidence="1">
        <name>Zn(2+)</name>
        <dbReference type="ChEBI" id="CHEBI:29105"/>
    </cofactor>
    <text evidence="1">Binds 1 zinc ion per subunit.</text>
</comment>
<comment type="subunit">
    <text evidence="1">Monomer.</text>
</comment>
<comment type="subcellular location">
    <subcellularLocation>
        <location evidence="1">Cytoplasm</location>
    </subcellularLocation>
</comment>
<comment type="similarity">
    <text evidence="1">Belongs to the class-I aminoacyl-tRNA synthetase family.</text>
</comment>
<accession>Q49V39</accession>
<organism>
    <name type="scientific">Staphylococcus saprophyticus subsp. saprophyticus (strain ATCC 15305 / DSM 20229 / NCIMB 8711 / NCTC 7292 / S-41)</name>
    <dbReference type="NCBI Taxonomy" id="342451"/>
    <lineage>
        <taxon>Bacteria</taxon>
        <taxon>Bacillati</taxon>
        <taxon>Bacillota</taxon>
        <taxon>Bacilli</taxon>
        <taxon>Bacillales</taxon>
        <taxon>Staphylococcaceae</taxon>
        <taxon>Staphylococcus</taxon>
    </lineage>
</organism>
<feature type="chain" id="PRO_0000240961" description="Cysteine--tRNA ligase">
    <location>
        <begin position="1"/>
        <end position="466"/>
    </location>
</feature>
<feature type="short sequence motif" description="'HIGH' region">
    <location>
        <begin position="30"/>
        <end position="40"/>
    </location>
</feature>
<feature type="short sequence motif" description="'KMSKS' region">
    <location>
        <begin position="265"/>
        <end position="269"/>
    </location>
</feature>
<feature type="binding site" evidence="1">
    <location>
        <position position="28"/>
    </location>
    <ligand>
        <name>Zn(2+)</name>
        <dbReference type="ChEBI" id="CHEBI:29105"/>
    </ligand>
</feature>
<feature type="binding site" evidence="1">
    <location>
        <position position="208"/>
    </location>
    <ligand>
        <name>Zn(2+)</name>
        <dbReference type="ChEBI" id="CHEBI:29105"/>
    </ligand>
</feature>
<feature type="binding site" evidence="1">
    <location>
        <position position="233"/>
    </location>
    <ligand>
        <name>Zn(2+)</name>
        <dbReference type="ChEBI" id="CHEBI:29105"/>
    </ligand>
</feature>
<feature type="binding site" evidence="1">
    <location>
        <position position="237"/>
    </location>
    <ligand>
        <name>Zn(2+)</name>
        <dbReference type="ChEBI" id="CHEBI:29105"/>
    </ligand>
</feature>
<feature type="binding site" evidence="1">
    <location>
        <position position="268"/>
    </location>
    <ligand>
        <name>ATP</name>
        <dbReference type="ChEBI" id="CHEBI:30616"/>
    </ligand>
</feature>
<keyword id="KW-0030">Aminoacyl-tRNA synthetase</keyword>
<keyword id="KW-0067">ATP-binding</keyword>
<keyword id="KW-0963">Cytoplasm</keyword>
<keyword id="KW-0436">Ligase</keyword>
<keyword id="KW-0479">Metal-binding</keyword>
<keyword id="KW-0547">Nucleotide-binding</keyword>
<keyword id="KW-0648">Protein biosynthesis</keyword>
<keyword id="KW-1185">Reference proteome</keyword>
<keyword id="KW-0862">Zinc</keyword>
<proteinExistence type="inferred from homology"/>
<evidence type="ECO:0000255" key="1">
    <source>
        <dbReference type="HAMAP-Rule" id="MF_00041"/>
    </source>
</evidence>
<name>SYC_STAS1</name>
<dbReference type="EC" id="6.1.1.16" evidence="1"/>
<dbReference type="EMBL" id="AP008934">
    <property type="protein sequence ID" value="BAE19371.1"/>
    <property type="molecule type" value="Genomic_DNA"/>
</dbReference>
<dbReference type="RefSeq" id="WP_002484173.1">
    <property type="nucleotide sequence ID" value="NZ_MTGA01000039.1"/>
</dbReference>
<dbReference type="SMR" id="Q49V39"/>
<dbReference type="GeneID" id="3615556"/>
<dbReference type="KEGG" id="ssp:SSP2226"/>
<dbReference type="PATRIC" id="fig|342451.11.peg.2217"/>
<dbReference type="eggNOG" id="COG0215">
    <property type="taxonomic scope" value="Bacteria"/>
</dbReference>
<dbReference type="HOGENOM" id="CLU_013528_0_1_9"/>
<dbReference type="OrthoDB" id="9815130at2"/>
<dbReference type="Proteomes" id="UP000006371">
    <property type="component" value="Chromosome"/>
</dbReference>
<dbReference type="GO" id="GO:0005829">
    <property type="term" value="C:cytosol"/>
    <property type="evidence" value="ECO:0007669"/>
    <property type="project" value="TreeGrafter"/>
</dbReference>
<dbReference type="GO" id="GO:0005524">
    <property type="term" value="F:ATP binding"/>
    <property type="evidence" value="ECO:0007669"/>
    <property type="project" value="UniProtKB-UniRule"/>
</dbReference>
<dbReference type="GO" id="GO:0004817">
    <property type="term" value="F:cysteine-tRNA ligase activity"/>
    <property type="evidence" value="ECO:0007669"/>
    <property type="project" value="UniProtKB-UniRule"/>
</dbReference>
<dbReference type="GO" id="GO:0008270">
    <property type="term" value="F:zinc ion binding"/>
    <property type="evidence" value="ECO:0007669"/>
    <property type="project" value="UniProtKB-UniRule"/>
</dbReference>
<dbReference type="GO" id="GO:0006423">
    <property type="term" value="P:cysteinyl-tRNA aminoacylation"/>
    <property type="evidence" value="ECO:0007669"/>
    <property type="project" value="UniProtKB-UniRule"/>
</dbReference>
<dbReference type="CDD" id="cd00672">
    <property type="entry name" value="CysRS_core"/>
    <property type="match status" value="1"/>
</dbReference>
<dbReference type="FunFam" id="3.40.50.620:FF:000009">
    <property type="entry name" value="Cysteine--tRNA ligase"/>
    <property type="match status" value="1"/>
</dbReference>
<dbReference type="Gene3D" id="1.20.120.1910">
    <property type="entry name" value="Cysteine-tRNA ligase, C-terminal anti-codon recognition domain"/>
    <property type="match status" value="1"/>
</dbReference>
<dbReference type="Gene3D" id="3.40.50.620">
    <property type="entry name" value="HUPs"/>
    <property type="match status" value="1"/>
</dbReference>
<dbReference type="HAMAP" id="MF_00041">
    <property type="entry name" value="Cys_tRNA_synth"/>
    <property type="match status" value="1"/>
</dbReference>
<dbReference type="InterPro" id="IPR015803">
    <property type="entry name" value="Cys-tRNA-ligase"/>
</dbReference>
<dbReference type="InterPro" id="IPR015273">
    <property type="entry name" value="Cys-tRNA-synt_Ia_DALR"/>
</dbReference>
<dbReference type="InterPro" id="IPR024909">
    <property type="entry name" value="Cys-tRNA/MSH_ligase"/>
</dbReference>
<dbReference type="InterPro" id="IPR056411">
    <property type="entry name" value="CysS_C"/>
</dbReference>
<dbReference type="InterPro" id="IPR014729">
    <property type="entry name" value="Rossmann-like_a/b/a_fold"/>
</dbReference>
<dbReference type="InterPro" id="IPR032678">
    <property type="entry name" value="tRNA-synt_1_cat_dom"/>
</dbReference>
<dbReference type="InterPro" id="IPR009080">
    <property type="entry name" value="tRNAsynth_Ia_anticodon-bd"/>
</dbReference>
<dbReference type="NCBIfam" id="TIGR00435">
    <property type="entry name" value="cysS"/>
    <property type="match status" value="1"/>
</dbReference>
<dbReference type="PANTHER" id="PTHR10890:SF3">
    <property type="entry name" value="CYSTEINE--TRNA LIGASE, CYTOPLASMIC"/>
    <property type="match status" value="1"/>
</dbReference>
<dbReference type="PANTHER" id="PTHR10890">
    <property type="entry name" value="CYSTEINYL-TRNA SYNTHETASE"/>
    <property type="match status" value="1"/>
</dbReference>
<dbReference type="Pfam" id="PF23493">
    <property type="entry name" value="CysS_C"/>
    <property type="match status" value="1"/>
</dbReference>
<dbReference type="Pfam" id="PF09190">
    <property type="entry name" value="DALR_2"/>
    <property type="match status" value="1"/>
</dbReference>
<dbReference type="Pfam" id="PF01406">
    <property type="entry name" value="tRNA-synt_1e"/>
    <property type="match status" value="1"/>
</dbReference>
<dbReference type="PRINTS" id="PR00983">
    <property type="entry name" value="TRNASYNTHCYS"/>
</dbReference>
<dbReference type="SMART" id="SM00840">
    <property type="entry name" value="DALR_2"/>
    <property type="match status" value="1"/>
</dbReference>
<dbReference type="SUPFAM" id="SSF47323">
    <property type="entry name" value="Anticodon-binding domain of a subclass of class I aminoacyl-tRNA synthetases"/>
    <property type="match status" value="1"/>
</dbReference>
<dbReference type="SUPFAM" id="SSF52374">
    <property type="entry name" value="Nucleotidylyl transferase"/>
    <property type="match status" value="1"/>
</dbReference>
<reference key="1">
    <citation type="journal article" date="2005" name="Proc. Natl. Acad. Sci. U.S.A.">
        <title>Whole genome sequence of Staphylococcus saprophyticus reveals the pathogenesis of uncomplicated urinary tract infection.</title>
        <authorList>
            <person name="Kuroda M."/>
            <person name="Yamashita A."/>
            <person name="Hirakawa H."/>
            <person name="Kumano M."/>
            <person name="Morikawa K."/>
            <person name="Higashide M."/>
            <person name="Maruyama A."/>
            <person name="Inose Y."/>
            <person name="Matoba K."/>
            <person name="Toh H."/>
            <person name="Kuhara S."/>
            <person name="Hattori M."/>
            <person name="Ohta T."/>
        </authorList>
    </citation>
    <scope>NUCLEOTIDE SEQUENCE [LARGE SCALE GENOMIC DNA]</scope>
    <source>
        <strain>ATCC 15305 / DSM 20229 / NCIMB 8711 / NCTC 7292 / S-41</strain>
    </source>
</reference>